<sequence>MKDPYDVIKRHYVTEKAKTLEGLSLGNGEGKKKGSFCKHPKYTFVVSCDATKPLIAQALESIYADKKVKVKSVNTICVKPQPARMFRGKRKGKTAGFKKAVVTFYEGHSIG</sequence>
<protein>
    <recommendedName>
        <fullName evidence="1">Large ribosomal subunit protein uL23</fullName>
    </recommendedName>
    <alternativeName>
        <fullName evidence="2">50S ribosomal protein L23</fullName>
    </alternativeName>
</protein>
<evidence type="ECO:0000255" key="1">
    <source>
        <dbReference type="HAMAP-Rule" id="MF_01369"/>
    </source>
</evidence>
<evidence type="ECO:0000305" key="2"/>
<dbReference type="EMBL" id="AE015925">
    <property type="protein sequence ID" value="AAP04847.1"/>
    <property type="molecule type" value="Genomic_DNA"/>
</dbReference>
<dbReference type="RefSeq" id="WP_011006068.1">
    <property type="nucleotide sequence ID" value="NC_003361.3"/>
</dbReference>
<dbReference type="SMR" id="Q824P9"/>
<dbReference type="STRING" id="227941.CCA_00095"/>
<dbReference type="KEGG" id="cca:CCA_00095"/>
<dbReference type="eggNOG" id="COG0089">
    <property type="taxonomic scope" value="Bacteria"/>
</dbReference>
<dbReference type="HOGENOM" id="CLU_037562_3_1_0"/>
<dbReference type="OrthoDB" id="9793353at2"/>
<dbReference type="Proteomes" id="UP000002193">
    <property type="component" value="Chromosome"/>
</dbReference>
<dbReference type="GO" id="GO:1990904">
    <property type="term" value="C:ribonucleoprotein complex"/>
    <property type="evidence" value="ECO:0007669"/>
    <property type="project" value="UniProtKB-KW"/>
</dbReference>
<dbReference type="GO" id="GO:0005840">
    <property type="term" value="C:ribosome"/>
    <property type="evidence" value="ECO:0007669"/>
    <property type="project" value="UniProtKB-KW"/>
</dbReference>
<dbReference type="GO" id="GO:0019843">
    <property type="term" value="F:rRNA binding"/>
    <property type="evidence" value="ECO:0007669"/>
    <property type="project" value="UniProtKB-UniRule"/>
</dbReference>
<dbReference type="GO" id="GO:0003735">
    <property type="term" value="F:structural constituent of ribosome"/>
    <property type="evidence" value="ECO:0007669"/>
    <property type="project" value="InterPro"/>
</dbReference>
<dbReference type="GO" id="GO:0006412">
    <property type="term" value="P:translation"/>
    <property type="evidence" value="ECO:0007669"/>
    <property type="project" value="UniProtKB-UniRule"/>
</dbReference>
<dbReference type="Gene3D" id="3.30.70.330">
    <property type="match status" value="1"/>
</dbReference>
<dbReference type="HAMAP" id="MF_01369_B">
    <property type="entry name" value="Ribosomal_uL23_B"/>
    <property type="match status" value="1"/>
</dbReference>
<dbReference type="InterPro" id="IPR012677">
    <property type="entry name" value="Nucleotide-bd_a/b_plait_sf"/>
</dbReference>
<dbReference type="InterPro" id="IPR013025">
    <property type="entry name" value="Ribosomal_uL23-like"/>
</dbReference>
<dbReference type="InterPro" id="IPR012678">
    <property type="entry name" value="Ribosomal_uL23/eL15/eS24_sf"/>
</dbReference>
<dbReference type="NCBIfam" id="NF004362">
    <property type="entry name" value="PRK05738.2-2"/>
    <property type="match status" value="1"/>
</dbReference>
<dbReference type="Pfam" id="PF00276">
    <property type="entry name" value="Ribosomal_L23"/>
    <property type="match status" value="1"/>
</dbReference>
<dbReference type="SUPFAM" id="SSF54189">
    <property type="entry name" value="Ribosomal proteins S24e, L23 and L15e"/>
    <property type="match status" value="1"/>
</dbReference>
<gene>
    <name evidence="1" type="primary">rplW</name>
    <name type="ordered locus">CCA_00095</name>
</gene>
<accession>Q824P9</accession>
<name>RL23_CHLCV</name>
<comment type="function">
    <text evidence="1">One of the early assembly proteins it binds 23S rRNA. One of the proteins that surrounds the polypeptide exit tunnel on the outside of the ribosome. Forms the main docking site for trigger factor binding to the ribosome.</text>
</comment>
<comment type="subunit">
    <text evidence="1">Part of the 50S ribosomal subunit. Contacts protein L29, and trigger factor when it is bound to the ribosome.</text>
</comment>
<comment type="similarity">
    <text evidence="1">Belongs to the universal ribosomal protein uL23 family.</text>
</comment>
<reference key="1">
    <citation type="journal article" date="2003" name="Nucleic Acids Res.">
        <title>Genome sequence of Chlamydophila caviae (Chlamydia psittaci GPIC): examining the role of niche-specific genes in the evolution of the Chlamydiaceae.</title>
        <authorList>
            <person name="Read T.D."/>
            <person name="Myers G.S.A."/>
            <person name="Brunham R.C."/>
            <person name="Nelson W.C."/>
            <person name="Paulsen I.T."/>
            <person name="Heidelberg J.F."/>
            <person name="Holtzapple E.K."/>
            <person name="Khouri H.M."/>
            <person name="Federova N.B."/>
            <person name="Carty H.A."/>
            <person name="Umayam L.A."/>
            <person name="Haft D.H."/>
            <person name="Peterson J.D."/>
            <person name="Beanan M.J."/>
            <person name="White O."/>
            <person name="Salzberg S.L."/>
            <person name="Hsia R.-C."/>
            <person name="McClarty G."/>
            <person name="Rank R.G."/>
            <person name="Bavoil P.M."/>
            <person name="Fraser C.M."/>
        </authorList>
    </citation>
    <scope>NUCLEOTIDE SEQUENCE [LARGE SCALE GENOMIC DNA]</scope>
    <source>
        <strain>ATCC VR-813 / DSM 19441 / 03DC25 / GPIC</strain>
    </source>
</reference>
<proteinExistence type="inferred from homology"/>
<keyword id="KW-0687">Ribonucleoprotein</keyword>
<keyword id="KW-0689">Ribosomal protein</keyword>
<keyword id="KW-0694">RNA-binding</keyword>
<keyword id="KW-0699">rRNA-binding</keyword>
<organism>
    <name type="scientific">Chlamydia caviae (strain ATCC VR-813 / DSM 19441 / 03DC25 / GPIC)</name>
    <name type="common">Chlamydophila caviae</name>
    <dbReference type="NCBI Taxonomy" id="227941"/>
    <lineage>
        <taxon>Bacteria</taxon>
        <taxon>Pseudomonadati</taxon>
        <taxon>Chlamydiota</taxon>
        <taxon>Chlamydiia</taxon>
        <taxon>Chlamydiales</taxon>
        <taxon>Chlamydiaceae</taxon>
        <taxon>Chlamydia/Chlamydophila group</taxon>
        <taxon>Chlamydia</taxon>
    </lineage>
</organism>
<feature type="chain" id="PRO_1000068058" description="Large ribosomal subunit protein uL23">
    <location>
        <begin position="1"/>
        <end position="111"/>
    </location>
</feature>